<comment type="function">
    <text evidence="1">Catalyzes the hydrolysis of glutamine to glutamate and ammonia as part of the biosynthesis of pyridoxal 5'-phosphate. The resulting ammonia molecule is channeled to the active site of PdxS.</text>
</comment>
<comment type="catalytic activity">
    <reaction evidence="1">
        <text>aldehydo-D-ribose 5-phosphate + D-glyceraldehyde 3-phosphate + L-glutamine = pyridoxal 5'-phosphate + L-glutamate + phosphate + 3 H2O + H(+)</text>
        <dbReference type="Rhea" id="RHEA:31507"/>
        <dbReference type="ChEBI" id="CHEBI:15377"/>
        <dbReference type="ChEBI" id="CHEBI:15378"/>
        <dbReference type="ChEBI" id="CHEBI:29985"/>
        <dbReference type="ChEBI" id="CHEBI:43474"/>
        <dbReference type="ChEBI" id="CHEBI:58273"/>
        <dbReference type="ChEBI" id="CHEBI:58359"/>
        <dbReference type="ChEBI" id="CHEBI:59776"/>
        <dbReference type="ChEBI" id="CHEBI:597326"/>
        <dbReference type="EC" id="4.3.3.6"/>
    </reaction>
</comment>
<comment type="catalytic activity">
    <reaction evidence="1">
        <text>L-glutamine + H2O = L-glutamate + NH4(+)</text>
        <dbReference type="Rhea" id="RHEA:15889"/>
        <dbReference type="ChEBI" id="CHEBI:15377"/>
        <dbReference type="ChEBI" id="CHEBI:28938"/>
        <dbReference type="ChEBI" id="CHEBI:29985"/>
        <dbReference type="ChEBI" id="CHEBI:58359"/>
        <dbReference type="EC" id="3.5.1.2"/>
    </reaction>
</comment>
<comment type="pathway">
    <text evidence="1">Cofactor biosynthesis; pyridoxal 5'-phosphate biosynthesis.</text>
</comment>
<comment type="subunit">
    <text evidence="1">In the presence of PdxS, forms a dodecamer of heterodimers. Only shows activity in the heterodimer.</text>
</comment>
<comment type="similarity">
    <text evidence="1">Belongs to the glutaminase PdxT/SNO family.</text>
</comment>
<name>PDXT_STRZP</name>
<gene>
    <name evidence="1" type="primary">pdxT</name>
    <name type="ordered locus">SPP_1487</name>
</gene>
<organism>
    <name type="scientific">Streptococcus pneumoniae (strain P1031)</name>
    <dbReference type="NCBI Taxonomy" id="488223"/>
    <lineage>
        <taxon>Bacteria</taxon>
        <taxon>Bacillati</taxon>
        <taxon>Bacillota</taxon>
        <taxon>Bacilli</taxon>
        <taxon>Lactobacillales</taxon>
        <taxon>Streptococcaceae</taxon>
        <taxon>Streptococcus</taxon>
    </lineage>
</organism>
<accession>C1CLG6</accession>
<feature type="chain" id="PRO_1000185906" description="Pyridoxal 5'-phosphate synthase subunit PdxT">
    <location>
        <begin position="1"/>
        <end position="193"/>
    </location>
</feature>
<feature type="active site" description="Nucleophile" evidence="1">
    <location>
        <position position="82"/>
    </location>
</feature>
<feature type="active site" description="Charge relay system" evidence="1">
    <location>
        <position position="172"/>
    </location>
</feature>
<feature type="active site" description="Charge relay system" evidence="1">
    <location>
        <position position="174"/>
    </location>
</feature>
<feature type="binding site" evidence="1">
    <location>
        <begin position="50"/>
        <end position="52"/>
    </location>
    <ligand>
        <name>L-glutamine</name>
        <dbReference type="ChEBI" id="CHEBI:58359"/>
    </ligand>
</feature>
<feature type="binding site" evidence="1">
    <location>
        <position position="109"/>
    </location>
    <ligand>
        <name>L-glutamine</name>
        <dbReference type="ChEBI" id="CHEBI:58359"/>
    </ligand>
</feature>
<feature type="binding site" evidence="1">
    <location>
        <begin position="136"/>
        <end position="137"/>
    </location>
    <ligand>
        <name>L-glutamine</name>
        <dbReference type="ChEBI" id="CHEBI:58359"/>
    </ligand>
</feature>
<sequence>MKIGILALQGAFAEHAKVLDQLGVESVELRNLDDFQQDQSDLSGLILPGGESTTMGKLLRDQNMLLPIREAILSGLPVFGTCAGLILLAKEITSQKESHLGTMDMVVERNAYGRQLGSFYTEAECKGVGKIPMTFIRGPIISSVGEGVEILATVNNQIVAAQEKNMLVSSFHPELTDDVRLHQYFINMCKEKS</sequence>
<reference key="1">
    <citation type="journal article" date="2010" name="Genome Biol.">
        <title>Structure and dynamics of the pan-genome of Streptococcus pneumoniae and closely related species.</title>
        <authorList>
            <person name="Donati C."/>
            <person name="Hiller N.L."/>
            <person name="Tettelin H."/>
            <person name="Muzzi A."/>
            <person name="Croucher N.J."/>
            <person name="Angiuoli S.V."/>
            <person name="Oggioni M."/>
            <person name="Dunning Hotopp J.C."/>
            <person name="Hu F.Z."/>
            <person name="Riley D.R."/>
            <person name="Covacci A."/>
            <person name="Mitchell T.J."/>
            <person name="Bentley S.D."/>
            <person name="Kilian M."/>
            <person name="Ehrlich G.D."/>
            <person name="Rappuoli R."/>
            <person name="Moxon E.R."/>
            <person name="Masignani V."/>
        </authorList>
    </citation>
    <scope>NUCLEOTIDE SEQUENCE [LARGE SCALE GENOMIC DNA]</scope>
    <source>
        <strain>P1031</strain>
    </source>
</reference>
<proteinExistence type="inferred from homology"/>
<dbReference type="EC" id="4.3.3.6" evidence="1"/>
<dbReference type="EC" id="3.5.1.2" evidence="1"/>
<dbReference type="EMBL" id="CP000920">
    <property type="protein sequence ID" value="ACO20552.1"/>
    <property type="molecule type" value="Genomic_DNA"/>
</dbReference>
<dbReference type="RefSeq" id="WP_000689945.1">
    <property type="nucleotide sequence ID" value="NC_012467.1"/>
</dbReference>
<dbReference type="SMR" id="C1CLG6"/>
<dbReference type="MEROPS" id="C26.A32"/>
<dbReference type="GeneID" id="45653283"/>
<dbReference type="KEGG" id="spp:SPP_1487"/>
<dbReference type="HOGENOM" id="CLU_069674_2_0_9"/>
<dbReference type="UniPathway" id="UPA00245"/>
<dbReference type="GO" id="GO:0005829">
    <property type="term" value="C:cytosol"/>
    <property type="evidence" value="ECO:0007669"/>
    <property type="project" value="TreeGrafter"/>
</dbReference>
<dbReference type="GO" id="GO:1903600">
    <property type="term" value="C:glutaminase complex"/>
    <property type="evidence" value="ECO:0007669"/>
    <property type="project" value="TreeGrafter"/>
</dbReference>
<dbReference type="GO" id="GO:0004359">
    <property type="term" value="F:glutaminase activity"/>
    <property type="evidence" value="ECO:0007669"/>
    <property type="project" value="UniProtKB-UniRule"/>
</dbReference>
<dbReference type="GO" id="GO:0036381">
    <property type="term" value="F:pyridoxal 5'-phosphate synthase (glutamine hydrolysing) activity"/>
    <property type="evidence" value="ECO:0007669"/>
    <property type="project" value="UniProtKB-UniRule"/>
</dbReference>
<dbReference type="GO" id="GO:0006543">
    <property type="term" value="P:glutamine catabolic process"/>
    <property type="evidence" value="ECO:0007669"/>
    <property type="project" value="UniProtKB-UniRule"/>
</dbReference>
<dbReference type="GO" id="GO:0042823">
    <property type="term" value="P:pyridoxal phosphate biosynthetic process"/>
    <property type="evidence" value="ECO:0007669"/>
    <property type="project" value="UniProtKB-UniRule"/>
</dbReference>
<dbReference type="GO" id="GO:0008614">
    <property type="term" value="P:pyridoxine metabolic process"/>
    <property type="evidence" value="ECO:0007669"/>
    <property type="project" value="TreeGrafter"/>
</dbReference>
<dbReference type="CDD" id="cd01749">
    <property type="entry name" value="GATase1_PB"/>
    <property type="match status" value="1"/>
</dbReference>
<dbReference type="FunFam" id="3.40.50.880:FF:000010">
    <property type="entry name" value="uncharacterized protein LOC100176842 isoform X2"/>
    <property type="match status" value="1"/>
</dbReference>
<dbReference type="Gene3D" id="3.40.50.880">
    <property type="match status" value="1"/>
</dbReference>
<dbReference type="HAMAP" id="MF_01615">
    <property type="entry name" value="PdxT"/>
    <property type="match status" value="1"/>
</dbReference>
<dbReference type="InterPro" id="IPR029062">
    <property type="entry name" value="Class_I_gatase-like"/>
</dbReference>
<dbReference type="InterPro" id="IPR002161">
    <property type="entry name" value="PdxT/SNO"/>
</dbReference>
<dbReference type="InterPro" id="IPR021196">
    <property type="entry name" value="PdxT/SNO_CS"/>
</dbReference>
<dbReference type="NCBIfam" id="TIGR03800">
    <property type="entry name" value="PLP_synth_Pdx2"/>
    <property type="match status" value="1"/>
</dbReference>
<dbReference type="PANTHER" id="PTHR31559">
    <property type="entry name" value="PYRIDOXAL 5'-PHOSPHATE SYNTHASE SUBUNIT SNO"/>
    <property type="match status" value="1"/>
</dbReference>
<dbReference type="PANTHER" id="PTHR31559:SF0">
    <property type="entry name" value="PYRIDOXAL 5'-PHOSPHATE SYNTHASE SUBUNIT SNO1-RELATED"/>
    <property type="match status" value="1"/>
</dbReference>
<dbReference type="Pfam" id="PF01174">
    <property type="entry name" value="SNO"/>
    <property type="match status" value="1"/>
</dbReference>
<dbReference type="PIRSF" id="PIRSF005639">
    <property type="entry name" value="Glut_amidoT_SNO"/>
    <property type="match status" value="1"/>
</dbReference>
<dbReference type="SUPFAM" id="SSF52317">
    <property type="entry name" value="Class I glutamine amidotransferase-like"/>
    <property type="match status" value="1"/>
</dbReference>
<dbReference type="PROSITE" id="PS01236">
    <property type="entry name" value="PDXT_SNO_1"/>
    <property type="match status" value="1"/>
</dbReference>
<dbReference type="PROSITE" id="PS51130">
    <property type="entry name" value="PDXT_SNO_2"/>
    <property type="match status" value="1"/>
</dbReference>
<protein>
    <recommendedName>
        <fullName evidence="1">Pyridoxal 5'-phosphate synthase subunit PdxT</fullName>
        <ecNumber evidence="1">4.3.3.6</ecNumber>
    </recommendedName>
    <alternativeName>
        <fullName evidence="1">Pdx2</fullName>
    </alternativeName>
    <alternativeName>
        <fullName evidence="1">Pyridoxal 5'-phosphate synthase glutaminase subunit</fullName>
        <ecNumber evidence="1">3.5.1.2</ecNumber>
    </alternativeName>
</protein>
<evidence type="ECO:0000255" key="1">
    <source>
        <dbReference type="HAMAP-Rule" id="MF_01615"/>
    </source>
</evidence>
<keyword id="KW-0315">Glutamine amidotransferase</keyword>
<keyword id="KW-0378">Hydrolase</keyword>
<keyword id="KW-0456">Lyase</keyword>
<keyword id="KW-0663">Pyridoxal phosphate</keyword>